<reference key="1">
    <citation type="journal article" date="2005" name="Science">
        <title>The transcriptional landscape of the mammalian genome.</title>
        <authorList>
            <person name="Carninci P."/>
            <person name="Kasukawa T."/>
            <person name="Katayama S."/>
            <person name="Gough J."/>
            <person name="Frith M.C."/>
            <person name="Maeda N."/>
            <person name="Oyama R."/>
            <person name="Ravasi T."/>
            <person name="Lenhard B."/>
            <person name="Wells C."/>
            <person name="Kodzius R."/>
            <person name="Shimokawa K."/>
            <person name="Bajic V.B."/>
            <person name="Brenner S.E."/>
            <person name="Batalov S."/>
            <person name="Forrest A.R."/>
            <person name="Zavolan M."/>
            <person name="Davis M.J."/>
            <person name="Wilming L.G."/>
            <person name="Aidinis V."/>
            <person name="Allen J.E."/>
            <person name="Ambesi-Impiombato A."/>
            <person name="Apweiler R."/>
            <person name="Aturaliya R.N."/>
            <person name="Bailey T.L."/>
            <person name="Bansal M."/>
            <person name="Baxter L."/>
            <person name="Beisel K.W."/>
            <person name="Bersano T."/>
            <person name="Bono H."/>
            <person name="Chalk A.M."/>
            <person name="Chiu K.P."/>
            <person name="Choudhary V."/>
            <person name="Christoffels A."/>
            <person name="Clutterbuck D.R."/>
            <person name="Crowe M.L."/>
            <person name="Dalla E."/>
            <person name="Dalrymple B.P."/>
            <person name="de Bono B."/>
            <person name="Della Gatta G."/>
            <person name="di Bernardo D."/>
            <person name="Down T."/>
            <person name="Engstrom P."/>
            <person name="Fagiolini M."/>
            <person name="Faulkner G."/>
            <person name="Fletcher C.F."/>
            <person name="Fukushima T."/>
            <person name="Furuno M."/>
            <person name="Futaki S."/>
            <person name="Gariboldi M."/>
            <person name="Georgii-Hemming P."/>
            <person name="Gingeras T.R."/>
            <person name="Gojobori T."/>
            <person name="Green R.E."/>
            <person name="Gustincich S."/>
            <person name="Harbers M."/>
            <person name="Hayashi Y."/>
            <person name="Hensch T.K."/>
            <person name="Hirokawa N."/>
            <person name="Hill D."/>
            <person name="Huminiecki L."/>
            <person name="Iacono M."/>
            <person name="Ikeo K."/>
            <person name="Iwama A."/>
            <person name="Ishikawa T."/>
            <person name="Jakt M."/>
            <person name="Kanapin A."/>
            <person name="Katoh M."/>
            <person name="Kawasawa Y."/>
            <person name="Kelso J."/>
            <person name="Kitamura H."/>
            <person name="Kitano H."/>
            <person name="Kollias G."/>
            <person name="Krishnan S.P."/>
            <person name="Kruger A."/>
            <person name="Kummerfeld S.K."/>
            <person name="Kurochkin I.V."/>
            <person name="Lareau L.F."/>
            <person name="Lazarevic D."/>
            <person name="Lipovich L."/>
            <person name="Liu J."/>
            <person name="Liuni S."/>
            <person name="McWilliam S."/>
            <person name="Madan Babu M."/>
            <person name="Madera M."/>
            <person name="Marchionni L."/>
            <person name="Matsuda H."/>
            <person name="Matsuzawa S."/>
            <person name="Miki H."/>
            <person name="Mignone F."/>
            <person name="Miyake S."/>
            <person name="Morris K."/>
            <person name="Mottagui-Tabar S."/>
            <person name="Mulder N."/>
            <person name="Nakano N."/>
            <person name="Nakauchi H."/>
            <person name="Ng P."/>
            <person name="Nilsson R."/>
            <person name="Nishiguchi S."/>
            <person name="Nishikawa S."/>
            <person name="Nori F."/>
            <person name="Ohara O."/>
            <person name="Okazaki Y."/>
            <person name="Orlando V."/>
            <person name="Pang K.C."/>
            <person name="Pavan W.J."/>
            <person name="Pavesi G."/>
            <person name="Pesole G."/>
            <person name="Petrovsky N."/>
            <person name="Piazza S."/>
            <person name="Reed J."/>
            <person name="Reid J.F."/>
            <person name="Ring B.Z."/>
            <person name="Ringwald M."/>
            <person name="Rost B."/>
            <person name="Ruan Y."/>
            <person name="Salzberg S.L."/>
            <person name="Sandelin A."/>
            <person name="Schneider C."/>
            <person name="Schoenbach C."/>
            <person name="Sekiguchi K."/>
            <person name="Semple C.A."/>
            <person name="Seno S."/>
            <person name="Sessa L."/>
            <person name="Sheng Y."/>
            <person name="Shibata Y."/>
            <person name="Shimada H."/>
            <person name="Shimada K."/>
            <person name="Silva D."/>
            <person name="Sinclair B."/>
            <person name="Sperling S."/>
            <person name="Stupka E."/>
            <person name="Sugiura K."/>
            <person name="Sultana R."/>
            <person name="Takenaka Y."/>
            <person name="Taki K."/>
            <person name="Tammoja K."/>
            <person name="Tan S.L."/>
            <person name="Tang S."/>
            <person name="Taylor M.S."/>
            <person name="Tegner J."/>
            <person name="Teichmann S.A."/>
            <person name="Ueda H.R."/>
            <person name="van Nimwegen E."/>
            <person name="Verardo R."/>
            <person name="Wei C.L."/>
            <person name="Yagi K."/>
            <person name="Yamanishi H."/>
            <person name="Zabarovsky E."/>
            <person name="Zhu S."/>
            <person name="Zimmer A."/>
            <person name="Hide W."/>
            <person name="Bult C."/>
            <person name="Grimmond S.M."/>
            <person name="Teasdale R.D."/>
            <person name="Liu E.T."/>
            <person name="Brusic V."/>
            <person name="Quackenbush J."/>
            <person name="Wahlestedt C."/>
            <person name="Mattick J.S."/>
            <person name="Hume D.A."/>
            <person name="Kai C."/>
            <person name="Sasaki D."/>
            <person name="Tomaru Y."/>
            <person name="Fukuda S."/>
            <person name="Kanamori-Katayama M."/>
            <person name="Suzuki M."/>
            <person name="Aoki J."/>
            <person name="Arakawa T."/>
            <person name="Iida J."/>
            <person name="Imamura K."/>
            <person name="Itoh M."/>
            <person name="Kato T."/>
            <person name="Kawaji H."/>
            <person name="Kawagashira N."/>
            <person name="Kawashima T."/>
            <person name="Kojima M."/>
            <person name="Kondo S."/>
            <person name="Konno H."/>
            <person name="Nakano K."/>
            <person name="Ninomiya N."/>
            <person name="Nishio T."/>
            <person name="Okada M."/>
            <person name="Plessy C."/>
            <person name="Shibata K."/>
            <person name="Shiraki T."/>
            <person name="Suzuki S."/>
            <person name="Tagami M."/>
            <person name="Waki K."/>
            <person name="Watahiki A."/>
            <person name="Okamura-Oho Y."/>
            <person name="Suzuki H."/>
            <person name="Kawai J."/>
            <person name="Hayashizaki Y."/>
        </authorList>
    </citation>
    <scope>NUCLEOTIDE SEQUENCE [LARGE SCALE MRNA]</scope>
    <source>
        <strain>C57BL/6J</strain>
        <tissue>Embryo</tissue>
    </source>
</reference>
<reference key="2">
    <citation type="journal article" date="2004" name="Genome Res.">
        <title>The status, quality, and expansion of the NIH full-length cDNA project: the Mammalian Gene Collection (MGC).</title>
        <authorList>
            <consortium name="The MGC Project Team"/>
        </authorList>
    </citation>
    <scope>NUCLEOTIDE SEQUENCE [LARGE SCALE MRNA]</scope>
    <source>
        <strain>FVB/N</strain>
        <tissue>Kidney</tissue>
    </source>
</reference>
<reference key="3">
    <citation type="journal article" date="2010" name="Cell">
        <title>A tissue-specific atlas of mouse protein phosphorylation and expression.</title>
        <authorList>
            <person name="Huttlin E.L."/>
            <person name="Jedrychowski M.P."/>
            <person name="Elias J.E."/>
            <person name="Goswami T."/>
            <person name="Rad R."/>
            <person name="Beausoleil S.A."/>
            <person name="Villen J."/>
            <person name="Haas W."/>
            <person name="Sowa M.E."/>
            <person name="Gygi S.P."/>
        </authorList>
    </citation>
    <scope>PHOSPHORYLATION [LARGE SCALE ANALYSIS] AT SER-436 AND SER-456</scope>
    <scope>IDENTIFICATION BY MASS SPECTROMETRY [LARGE SCALE ANALYSIS]</scope>
    <source>
        <tissue>Spleen</tissue>
        <tissue>Testis</tissue>
    </source>
</reference>
<sequence length="572" mass="63132">MKVITCEIAWHNKEPVYSLDFQHGATWKIHRLASAGVDTAVRIWKLERGPDGKAIVEFLSNLARHTKAVNVVRFSPTGEILASGGDDAVILLWKMNDSKEPEQIAFQDEEEAQLNKENWTVVKTLRGHLEDVYDICWATDGNLMTSASVDNTVIIWDVSKGQKISIFNEHKSYVQGVTWDPLGQYIATLSCDRVLRIYNTQKKRVAFNISKMLSGQGPEGEARSFRMFHDDSMKSFFRRLSFTPDGSLLLTPAGCMESGENVTNTTYVFSRKHLKRPIAHLPCPGKATLAVRCCPVYFELRPVAETEKASEEPSPELVNLPYRMVFAVASEDSVLLYDTQQSFPFGYVSNIHYHTLSDISWSSDGAFLAISSTDGYCTFVTFEKGELGIPLKEKPVLSIRTPDTAKKAKNQTHQGSSPGSRSVEGTPSNRTQDPSSPCTTPSPTTQSPAPSAIKDSPSAIPAGKSPLPQPSEEKTLQPAGQNMKAPQPRRVTLNTLQTWGKTAPRRINLTPLKTDTVPNPQPNSGTAPSTEEVQPEAPGEPPEEPPELKRPRLEEREGDAQNLAPDDSSKTV</sequence>
<feature type="chain" id="PRO_0000050897" description="Chromatin assembly factor 1 subunit B">
    <location>
        <begin position="1"/>
        <end position="572"/>
    </location>
</feature>
<feature type="repeat" description="WD 1">
    <location>
        <begin position="11"/>
        <end position="54"/>
    </location>
</feature>
<feature type="repeat" description="WD 2">
    <location>
        <begin position="64"/>
        <end position="103"/>
    </location>
</feature>
<feature type="repeat" description="WD 3">
    <location>
        <begin position="127"/>
        <end position="166"/>
    </location>
</feature>
<feature type="repeat" description="WD 4">
    <location>
        <begin position="169"/>
        <end position="208"/>
    </location>
</feature>
<feature type="repeat" description="WD 5">
    <location>
        <begin position="228"/>
        <end position="279"/>
    </location>
</feature>
<feature type="repeat" description="WD 6">
    <location>
        <begin position="301"/>
        <end position="347"/>
    </location>
</feature>
<feature type="repeat" description="WD 7">
    <location>
        <begin position="351"/>
        <end position="392"/>
    </location>
</feature>
<feature type="region of interest" description="Disordered" evidence="4">
    <location>
        <begin position="403"/>
        <end position="572"/>
    </location>
</feature>
<feature type="compositionally biased region" description="Polar residues" evidence="4">
    <location>
        <begin position="411"/>
        <end position="430"/>
    </location>
</feature>
<feature type="compositionally biased region" description="Low complexity" evidence="4">
    <location>
        <begin position="431"/>
        <end position="452"/>
    </location>
</feature>
<feature type="compositionally biased region" description="Polar residues" evidence="4">
    <location>
        <begin position="511"/>
        <end position="529"/>
    </location>
</feature>
<feature type="compositionally biased region" description="Basic and acidic residues" evidence="4">
    <location>
        <begin position="546"/>
        <end position="559"/>
    </location>
</feature>
<feature type="modified residue" description="Phosphothreonine" evidence="1">
    <location>
        <position position="401"/>
    </location>
</feature>
<feature type="modified residue" description="Phosphoserine" evidence="1">
    <location>
        <position position="416"/>
    </location>
</feature>
<feature type="modified residue" description="Phosphothreonine" evidence="1">
    <location>
        <position position="426"/>
    </location>
</feature>
<feature type="modified residue" description="Phosphoserine" evidence="7">
    <location>
        <position position="436"/>
    </location>
</feature>
<feature type="modified residue" description="Phosphothreonine" evidence="1">
    <location>
        <position position="440"/>
    </location>
</feature>
<feature type="modified residue" description="Phosphoserine" evidence="7">
    <location>
        <position position="456"/>
    </location>
</feature>
<feature type="modified residue" description="Phosphoserine" evidence="1">
    <location>
        <position position="465"/>
    </location>
</feature>
<feature type="modified residue" description="N6-acetyllysine" evidence="1">
    <location>
        <position position="501"/>
    </location>
</feature>
<feature type="modified residue" description="Phosphothreonine" evidence="3">
    <location>
        <position position="502"/>
    </location>
</feature>
<feature type="modified residue" description="Phosphothreonine" evidence="3">
    <location>
        <position position="510"/>
    </location>
</feature>
<name>CAF1B_MOUSE</name>
<evidence type="ECO:0000250" key="1">
    <source>
        <dbReference type="UniProtKB" id="Q13112"/>
    </source>
</evidence>
<evidence type="ECO:0000250" key="2">
    <source>
        <dbReference type="UniProtKB" id="Q5R1S9"/>
    </source>
</evidence>
<evidence type="ECO:0000255" key="3"/>
<evidence type="ECO:0000256" key="4">
    <source>
        <dbReference type="SAM" id="MobiDB-lite"/>
    </source>
</evidence>
<evidence type="ECO:0000305" key="5"/>
<evidence type="ECO:0000312" key="6">
    <source>
        <dbReference type="MGI" id="MGI:1314881"/>
    </source>
</evidence>
<evidence type="ECO:0007744" key="7">
    <source>
    </source>
</evidence>
<comment type="function">
    <text evidence="1 2">Acts as a component of the histone chaperone complex chromatin assembly factor 1 (CAF-1), which assembles histone octamers onto DNA during replication and repair. CAF-1 performs the first step of the nucleosome assembly process, bringing newly synthesized histones H3 and H4 to replicating DNA; histones H2A/H2B can bind to this chromatin precursor subsequent to DNA replication to complete the histone octamer (By similarity).</text>
</comment>
<comment type="subunit">
    <text evidence="1 2">Subunit of the CAF-1 complex that contains RBBP4, CHAF1B and CHAF1A. CHAF1A binds directly to CHAF1B (By similarity). Interacts with histones H3.1, H3.2 and H3.1t (By similarity).</text>
</comment>
<comment type="subcellular location">
    <subcellularLocation>
        <location evidence="1">Nucleus</location>
    </subcellularLocation>
    <subcellularLocation>
        <location evidence="1">Cytoplasm</location>
    </subcellularLocation>
    <text evidence="1">DNA replication foci. Cytoplasmic in M phase.</text>
</comment>
<comment type="similarity">
    <text evidence="5">Belongs to the WD repeat HIR1 family.</text>
</comment>
<protein>
    <recommendedName>
        <fullName evidence="5">Chromatin assembly factor 1 subunit B</fullName>
        <shortName>CAF-1 subunit B</shortName>
    </recommendedName>
    <alternativeName>
        <fullName>Chromatin assembly factor I p60 subunit</fullName>
        <shortName>CAF-I 60 kDa subunit</shortName>
        <shortName>CAF-I p60</shortName>
    </alternativeName>
</protein>
<accession>Q9D0N7</accession>
<dbReference type="EMBL" id="AK011243">
    <property type="protein sequence ID" value="BAB27490.1"/>
    <property type="molecule type" value="mRNA"/>
</dbReference>
<dbReference type="EMBL" id="BC013532">
    <property type="protein sequence ID" value="AAH13532.1"/>
    <property type="molecule type" value="mRNA"/>
</dbReference>
<dbReference type="CCDS" id="CCDS28344.1"/>
<dbReference type="RefSeq" id="NP_001406107.1">
    <property type="nucleotide sequence ID" value="NM_001419178.1"/>
</dbReference>
<dbReference type="RefSeq" id="NP_001406108.1">
    <property type="nucleotide sequence ID" value="NM_001419179.1"/>
</dbReference>
<dbReference type="RefSeq" id="NP_082359.1">
    <property type="nucleotide sequence ID" value="NM_028083.5"/>
</dbReference>
<dbReference type="RefSeq" id="XP_006522910.1">
    <property type="nucleotide sequence ID" value="XM_006522847.3"/>
</dbReference>
<dbReference type="SMR" id="Q9D0N7"/>
<dbReference type="BioGRID" id="225873">
    <property type="interactions" value="3"/>
</dbReference>
<dbReference type="ComplexPortal" id="CPX-570">
    <property type="entry name" value="Chromatin assembly factor 1 complex"/>
</dbReference>
<dbReference type="CORUM" id="Q9D0N7"/>
<dbReference type="FunCoup" id="Q9D0N7">
    <property type="interactions" value="2044"/>
</dbReference>
<dbReference type="IntAct" id="Q9D0N7">
    <property type="interactions" value="2"/>
</dbReference>
<dbReference type="MINT" id="Q9D0N7"/>
<dbReference type="STRING" id="10090.ENSMUSP00000023666"/>
<dbReference type="GlyGen" id="Q9D0N7">
    <property type="glycosylation" value="4 sites, 1 N-linked glycan (3 sites)"/>
</dbReference>
<dbReference type="iPTMnet" id="Q9D0N7"/>
<dbReference type="PhosphoSitePlus" id="Q9D0N7"/>
<dbReference type="jPOST" id="Q9D0N7"/>
<dbReference type="PaxDb" id="10090-ENSMUSP00000023666"/>
<dbReference type="PeptideAtlas" id="Q9D0N7"/>
<dbReference type="ProteomicsDB" id="265274"/>
<dbReference type="Pumba" id="Q9D0N7"/>
<dbReference type="Antibodypedia" id="8327">
    <property type="antibodies" value="324 antibodies from 35 providers"/>
</dbReference>
<dbReference type="DNASU" id="110749"/>
<dbReference type="Ensembl" id="ENSMUST00000023666.11">
    <property type="protein sequence ID" value="ENSMUSP00000023666.5"/>
    <property type="gene ID" value="ENSMUSG00000022945.13"/>
</dbReference>
<dbReference type="Ensembl" id="ENSMUST00000117099.8">
    <property type="protein sequence ID" value="ENSMUSP00000113684.2"/>
    <property type="gene ID" value="ENSMUSG00000022945.13"/>
</dbReference>
<dbReference type="GeneID" id="110749"/>
<dbReference type="KEGG" id="mmu:110749"/>
<dbReference type="UCSC" id="uc008aac.1">
    <property type="organism name" value="mouse"/>
</dbReference>
<dbReference type="AGR" id="MGI:1314881"/>
<dbReference type="CTD" id="8208"/>
<dbReference type="MGI" id="MGI:1314881">
    <property type="gene designation" value="Chaf1b"/>
</dbReference>
<dbReference type="VEuPathDB" id="HostDB:ENSMUSG00000022945"/>
<dbReference type="eggNOG" id="KOG1009">
    <property type="taxonomic scope" value="Eukaryota"/>
</dbReference>
<dbReference type="GeneTree" id="ENSGT00550000074968"/>
<dbReference type="HOGENOM" id="CLU_010127_5_2_1"/>
<dbReference type="InParanoid" id="Q9D0N7"/>
<dbReference type="OMA" id="QIYWHES"/>
<dbReference type="OrthoDB" id="71227at2759"/>
<dbReference type="PhylomeDB" id="Q9D0N7"/>
<dbReference type="TreeFam" id="TF313062"/>
<dbReference type="BioGRID-ORCS" id="110749">
    <property type="hits" value="43 hits in 117 CRISPR screens"/>
</dbReference>
<dbReference type="ChiTaRS" id="Chaf1b">
    <property type="organism name" value="mouse"/>
</dbReference>
<dbReference type="PRO" id="PR:Q9D0N7"/>
<dbReference type="Proteomes" id="UP000000589">
    <property type="component" value="Chromosome 16"/>
</dbReference>
<dbReference type="RNAct" id="Q9D0N7">
    <property type="molecule type" value="protein"/>
</dbReference>
<dbReference type="Bgee" id="ENSMUSG00000022945">
    <property type="expression patterns" value="Expressed in hindlimb bud and 216 other cell types or tissues"/>
</dbReference>
<dbReference type="ExpressionAtlas" id="Q9D0N7">
    <property type="expression patterns" value="baseline and differential"/>
</dbReference>
<dbReference type="GO" id="GO:0033186">
    <property type="term" value="C:CAF-1 complex"/>
    <property type="evidence" value="ECO:0000250"/>
    <property type="project" value="UniProtKB"/>
</dbReference>
<dbReference type="GO" id="GO:0000785">
    <property type="term" value="C:chromatin"/>
    <property type="evidence" value="ECO:0000266"/>
    <property type="project" value="ComplexPortal"/>
</dbReference>
<dbReference type="GO" id="GO:0005737">
    <property type="term" value="C:cytoplasm"/>
    <property type="evidence" value="ECO:0007669"/>
    <property type="project" value="UniProtKB-SubCell"/>
</dbReference>
<dbReference type="GO" id="GO:0005654">
    <property type="term" value="C:nucleoplasm"/>
    <property type="evidence" value="ECO:0007669"/>
    <property type="project" value="Ensembl"/>
</dbReference>
<dbReference type="GO" id="GO:0006281">
    <property type="term" value="P:DNA repair"/>
    <property type="evidence" value="ECO:0007669"/>
    <property type="project" value="UniProtKB-KW"/>
</dbReference>
<dbReference type="GO" id="GO:0006260">
    <property type="term" value="P:DNA replication"/>
    <property type="evidence" value="ECO:0007669"/>
    <property type="project" value="UniProtKB-KW"/>
</dbReference>
<dbReference type="GO" id="GO:0006335">
    <property type="term" value="P:DNA replication-dependent chromatin assembly"/>
    <property type="evidence" value="ECO:0000250"/>
    <property type="project" value="UniProtKB"/>
</dbReference>
<dbReference type="GO" id="GO:0006334">
    <property type="term" value="P:nucleosome assembly"/>
    <property type="evidence" value="ECO:0007669"/>
    <property type="project" value="Ensembl"/>
</dbReference>
<dbReference type="FunFam" id="2.130.10.10:FF:000248">
    <property type="entry name" value="Chromatin assembly factor 1 subunit B"/>
    <property type="match status" value="1"/>
</dbReference>
<dbReference type="FunFam" id="2.130.10.10:FF:001187">
    <property type="entry name" value="Chromatin assembly factor-1 p105 subunit"/>
    <property type="match status" value="1"/>
</dbReference>
<dbReference type="Gene3D" id="2.130.10.10">
    <property type="entry name" value="YVTN repeat-like/Quinoprotein amine dehydrogenase"/>
    <property type="match status" value="2"/>
</dbReference>
<dbReference type="InterPro" id="IPR029129">
    <property type="entry name" value="CAF1_p60_C"/>
</dbReference>
<dbReference type="InterPro" id="IPR055410">
    <property type="entry name" value="CAF1B_HIR1_beta-prop"/>
</dbReference>
<dbReference type="InterPro" id="IPR001632">
    <property type="entry name" value="Gprotein_B"/>
</dbReference>
<dbReference type="InterPro" id="IPR045145">
    <property type="entry name" value="PTHR15271"/>
</dbReference>
<dbReference type="InterPro" id="IPR015943">
    <property type="entry name" value="WD40/YVTN_repeat-like_dom_sf"/>
</dbReference>
<dbReference type="InterPro" id="IPR019775">
    <property type="entry name" value="WD40_repeat_CS"/>
</dbReference>
<dbReference type="InterPro" id="IPR036322">
    <property type="entry name" value="WD40_repeat_dom_sf"/>
</dbReference>
<dbReference type="InterPro" id="IPR001680">
    <property type="entry name" value="WD40_rpt"/>
</dbReference>
<dbReference type="PANTHER" id="PTHR15271">
    <property type="entry name" value="CHROMATIN ASSEMBLY FACTOR 1 SUBUNIT B"/>
    <property type="match status" value="1"/>
</dbReference>
<dbReference type="PANTHER" id="PTHR15271:SF4">
    <property type="entry name" value="CHROMATIN ASSEMBLY FACTOR 1 SUBUNIT B"/>
    <property type="match status" value="1"/>
</dbReference>
<dbReference type="Pfam" id="PF24105">
    <property type="entry name" value="Beta-prop_CAF1B_HIR1"/>
    <property type="match status" value="1"/>
</dbReference>
<dbReference type="Pfam" id="PF15512">
    <property type="entry name" value="CAF-1_p60_C"/>
    <property type="match status" value="1"/>
</dbReference>
<dbReference type="PRINTS" id="PR00319">
    <property type="entry name" value="GPROTEINB"/>
</dbReference>
<dbReference type="SMART" id="SM00320">
    <property type="entry name" value="WD40"/>
    <property type="match status" value="6"/>
</dbReference>
<dbReference type="SUPFAM" id="SSF50978">
    <property type="entry name" value="WD40 repeat-like"/>
    <property type="match status" value="1"/>
</dbReference>
<dbReference type="PROSITE" id="PS00678">
    <property type="entry name" value="WD_REPEATS_1"/>
    <property type="match status" value="1"/>
</dbReference>
<dbReference type="PROSITE" id="PS50082">
    <property type="entry name" value="WD_REPEATS_2"/>
    <property type="match status" value="3"/>
</dbReference>
<dbReference type="PROSITE" id="PS50294">
    <property type="entry name" value="WD_REPEATS_REGION"/>
    <property type="match status" value="1"/>
</dbReference>
<keyword id="KW-0007">Acetylation</keyword>
<keyword id="KW-0131">Cell cycle</keyword>
<keyword id="KW-0143">Chaperone</keyword>
<keyword id="KW-0156">Chromatin regulator</keyword>
<keyword id="KW-0963">Cytoplasm</keyword>
<keyword id="KW-0227">DNA damage</keyword>
<keyword id="KW-0234">DNA repair</keyword>
<keyword id="KW-0235">DNA replication</keyword>
<keyword id="KW-0539">Nucleus</keyword>
<keyword id="KW-0597">Phosphoprotein</keyword>
<keyword id="KW-1185">Reference proteome</keyword>
<keyword id="KW-0677">Repeat</keyword>
<keyword id="KW-0853">WD repeat</keyword>
<proteinExistence type="evidence at protein level"/>
<gene>
    <name evidence="6" type="primary">Chaf1b</name>
</gene>
<organism>
    <name type="scientific">Mus musculus</name>
    <name type="common">Mouse</name>
    <dbReference type="NCBI Taxonomy" id="10090"/>
    <lineage>
        <taxon>Eukaryota</taxon>
        <taxon>Metazoa</taxon>
        <taxon>Chordata</taxon>
        <taxon>Craniata</taxon>
        <taxon>Vertebrata</taxon>
        <taxon>Euteleostomi</taxon>
        <taxon>Mammalia</taxon>
        <taxon>Eutheria</taxon>
        <taxon>Euarchontoglires</taxon>
        <taxon>Glires</taxon>
        <taxon>Rodentia</taxon>
        <taxon>Myomorpha</taxon>
        <taxon>Muroidea</taxon>
        <taxon>Muridae</taxon>
        <taxon>Murinae</taxon>
        <taxon>Mus</taxon>
        <taxon>Mus</taxon>
    </lineage>
</organism>